<accession>P24621</accession>
<feature type="chain" id="PRO_0000066244" description="Uncharacterized protein in grm 3'region">
    <location>
        <begin position="1"/>
        <end position="105" status="greater than"/>
    </location>
</feature>
<feature type="region of interest" description="Disordered" evidence="1">
    <location>
        <begin position="80"/>
        <end position="105"/>
    </location>
</feature>
<feature type="non-terminal residue">
    <location>
        <position position="105"/>
    </location>
</feature>
<protein>
    <recommendedName>
        <fullName>Uncharacterized protein in grm 3'region</fullName>
    </recommendedName>
</protein>
<reference key="1">
    <citation type="journal article" date="1991" name="Gene">
        <title>Cloning and characterization of gentamicin-resistance genes from Micromonospora purpurea and Micromonospora rosea.</title>
        <authorList>
            <person name="Kelemen G.H."/>
            <person name="Cundliffe E."/>
            <person name="Financsek I."/>
        </authorList>
    </citation>
    <scope>NUCLEOTIDE SEQUENCE [GENOMIC DNA]</scope>
</reference>
<dbReference type="EMBL" id="M55521">
    <property type="protein sequence ID" value="AAA25339.1"/>
    <property type="molecule type" value="Genomic_DNA"/>
</dbReference>
<dbReference type="PIR" id="PW0018">
    <property type="entry name" value="PW0018"/>
</dbReference>
<evidence type="ECO:0000256" key="1">
    <source>
        <dbReference type="SAM" id="MobiDB-lite"/>
    </source>
</evidence>
<organism>
    <name type="scientific">Micromonospora rosea</name>
    <dbReference type="NCBI Taxonomy" id="1878"/>
    <lineage>
        <taxon>Bacteria</taxon>
        <taxon>Bacillati</taxon>
        <taxon>Actinomycetota</taxon>
        <taxon>Actinomycetes</taxon>
        <taxon>Micromonosporales</taxon>
        <taxon>Micromonosporaceae</taxon>
        <taxon>Micromonospora</taxon>
    </lineage>
</organism>
<name>YGRM_MICRO</name>
<proteinExistence type="predicted"/>
<sequence>MQVQILALSRSLARAGVDQLVLTLGFPGLPPTKQIEPGLTVRIARMSLPQIRSEITGLVGLGQAWLIGTIREWSGCVAATGGPTSSTCTRRSDLATGRGSDRRPD</sequence>